<dbReference type="EC" id="1.14.11.-"/>
<dbReference type="EMBL" id="AF418240">
    <property type="protein sequence ID" value="AAL14665.1"/>
    <property type="molecule type" value="mRNA"/>
</dbReference>
<dbReference type="SMR" id="Q944Z9"/>
<dbReference type="ExpressionAtlas" id="Q944Z9">
    <property type="expression patterns" value="baseline and differential"/>
</dbReference>
<dbReference type="GO" id="GO:0051213">
    <property type="term" value="F:dioxygenase activity"/>
    <property type="evidence" value="ECO:0007669"/>
    <property type="project" value="UniProtKB-KW"/>
</dbReference>
<dbReference type="GO" id="GO:0046872">
    <property type="term" value="F:metal ion binding"/>
    <property type="evidence" value="ECO:0007669"/>
    <property type="project" value="UniProtKB-KW"/>
</dbReference>
<dbReference type="FunFam" id="2.60.120.330:FF:000061">
    <property type="entry name" value="2-oxoglutarate-dependent dioxygenase AOP3"/>
    <property type="match status" value="1"/>
</dbReference>
<dbReference type="FunFam" id="2.60.120.330:FF:000062">
    <property type="entry name" value="2-oxoglutarate-dependent dioxygenase AOP3"/>
    <property type="match status" value="1"/>
</dbReference>
<dbReference type="Gene3D" id="2.60.120.330">
    <property type="entry name" value="B-lactam Antibiotic, Isopenicillin N Synthase, Chain"/>
    <property type="match status" value="2"/>
</dbReference>
<dbReference type="InterPro" id="IPR026992">
    <property type="entry name" value="DIOX_N"/>
</dbReference>
<dbReference type="InterPro" id="IPR044861">
    <property type="entry name" value="IPNS-like_FE2OG_OXY"/>
</dbReference>
<dbReference type="InterPro" id="IPR027443">
    <property type="entry name" value="IPNS-like_sf"/>
</dbReference>
<dbReference type="InterPro" id="IPR050231">
    <property type="entry name" value="Iron_ascorbate_oxido_reductase"/>
</dbReference>
<dbReference type="InterPro" id="IPR005123">
    <property type="entry name" value="Oxoglu/Fe-dep_dioxygenase_dom"/>
</dbReference>
<dbReference type="PANTHER" id="PTHR47990">
    <property type="entry name" value="2-OXOGLUTARATE (2OG) AND FE(II)-DEPENDENT OXYGENASE SUPERFAMILY PROTEIN-RELATED"/>
    <property type="match status" value="1"/>
</dbReference>
<dbReference type="Pfam" id="PF03171">
    <property type="entry name" value="2OG-FeII_Oxy"/>
    <property type="match status" value="1"/>
</dbReference>
<dbReference type="Pfam" id="PF14226">
    <property type="entry name" value="DIOX_N"/>
    <property type="match status" value="1"/>
</dbReference>
<dbReference type="SUPFAM" id="SSF51197">
    <property type="entry name" value="Clavaminate synthase-like"/>
    <property type="match status" value="1"/>
</dbReference>
<dbReference type="PROSITE" id="PS51471">
    <property type="entry name" value="FE2OG_OXY"/>
    <property type="match status" value="1"/>
</dbReference>
<gene>
    <name type="primary">AOP2</name>
</gene>
<protein>
    <recommendedName>
        <fullName>2-oxoglutarate-dependent dioxygenase AOP2</fullName>
        <ecNumber>1.14.11.-</ecNumber>
    </recommendedName>
</protein>
<evidence type="ECO:0000255" key="1">
    <source>
        <dbReference type="PROSITE-ProRule" id="PRU00805"/>
    </source>
</evidence>
<evidence type="ECO:0000269" key="2">
    <source>
    </source>
</evidence>
<evidence type="ECO:0000305" key="3"/>
<evidence type="ECO:0000305" key="4">
    <source>
    </source>
</evidence>
<sequence length="432" mass="47885">MGSCSLQLPLINLADKTLEPGSSKWAEVRSDVRKALQDFGCFEASYDKVSLELQESIMKTMEELFALPVETKQRNVCPKPYVGYLNHNNLSESLGISNANILENINEFTQQLWPHGDGNENISKTIQLFAEKLVEIDVMVRRMVMESFGIEKYIDDHLKSTEYRMRLMKYIAPPEGDANTTVDDYADLLAKLNIDGVEPNVGVKVNADISDDVNANPSVNAGVGANVNADTGVNDNLNVDAEANGDANIAVGGGVNANTDLGVGVNVNSNVAVNAKTGATSGDDVEANDDNEEKKLGLPCHTDKNLFTVLFQHEIEGLEVKTKDEKWIRVKPSPNTFIVIAGDSLCALMNGRIRAPYHRVRVTEKKRTRYTAAIFTCPKPDYVIEAPKELVDEKHPRLFRPFDYRDLFTFYHSEAGRKIQYTLQAYCAVSEA</sequence>
<feature type="chain" id="PRO_0000423936" description="2-oxoglutarate-dependent dioxygenase AOP2">
    <location>
        <begin position="1"/>
        <end position="432"/>
    </location>
</feature>
<feature type="domain" description="Fe2OG dioxygenase" evidence="1">
    <location>
        <begin position="281"/>
        <end position="378"/>
    </location>
</feature>
<feature type="binding site" evidence="1">
    <location>
        <position position="301"/>
    </location>
    <ligand>
        <name>Fe cation</name>
        <dbReference type="ChEBI" id="CHEBI:24875"/>
    </ligand>
</feature>
<feature type="binding site" evidence="1">
    <location>
        <position position="303"/>
    </location>
    <ligand>
        <name>Fe cation</name>
        <dbReference type="ChEBI" id="CHEBI:24875"/>
    </ligand>
</feature>
<feature type="binding site" evidence="1">
    <location>
        <position position="358"/>
    </location>
    <ligand>
        <name>Fe cation</name>
        <dbReference type="ChEBI" id="CHEBI:24875"/>
    </ligand>
</feature>
<feature type="binding site" evidence="1">
    <location>
        <position position="369"/>
    </location>
    <ligand>
        <name>2-oxoglutarate</name>
        <dbReference type="ChEBI" id="CHEBI:16810"/>
    </ligand>
</feature>
<organism>
    <name type="scientific">Arabidopsis thaliana</name>
    <name type="common">Mouse-ear cress</name>
    <dbReference type="NCBI Taxonomy" id="3702"/>
    <lineage>
        <taxon>Eukaryota</taxon>
        <taxon>Viridiplantae</taxon>
        <taxon>Streptophyta</taxon>
        <taxon>Embryophyta</taxon>
        <taxon>Tracheophyta</taxon>
        <taxon>Spermatophyta</taxon>
        <taxon>Magnoliopsida</taxon>
        <taxon>eudicotyledons</taxon>
        <taxon>Gunneridae</taxon>
        <taxon>Pentapetalae</taxon>
        <taxon>rosids</taxon>
        <taxon>malvids</taxon>
        <taxon>Brassicales</taxon>
        <taxon>Brassicaceae</taxon>
        <taxon>Camelineae</taxon>
        <taxon>Arabidopsis</taxon>
    </lineage>
</organism>
<name>AOP2L_ARATH</name>
<accession>Q944Z9</accession>
<comment type="function">
    <text evidence="2">2-oxoglutarate-dependent dioxygenase involved in glucosinolates biosynthesis. Catalyzes the conversion of methylsulfinylalkyl glucosinolates to alkenyl glucosinolates.</text>
</comment>
<comment type="cofactor">
    <cofactor evidence="1">
        <name>Fe(2+)</name>
        <dbReference type="ChEBI" id="CHEBI:29033"/>
    </cofactor>
    <text evidence="1">Binds 1 Fe(2+) ion per subunit.</text>
</comment>
<comment type="similarity">
    <text evidence="3">Belongs to the iron/ascorbate-dependent oxidoreductase family.</text>
</comment>
<comment type="caution">
    <text evidence="4">AOP1, AOP2 and AOP3 are found in tandem and inverted duplications on chromosome IV and encode 2-oxoglutarate-dependent dioxygenases involved in glucosinolates biosynthesis. In cv. Columbia, AOP2 (AC Q9ZTA2) cDNA contains a 5-bp deletion that leads to a non-functional protein and AOP3 (AC Q9ZTA1) is not expressed. The functional and expressed alleles for AOP2 (AC Q945B5) and AOP3 (AC Q945B4) are found in cv. Cvi and cv. Landsberg erecta, respectively. No ecotype coexpresses both AOP2 and AOP3 genes. The catalytic role of AOP1 is still uncertain (PubMed:11251105).</text>
</comment>
<reference key="1">
    <citation type="journal article" date="2001" name="Plant Cell">
        <title>Gene duplication in the diversification of secondary metabolism: tandem 2-oxoglutarate-dependent dioxygenases control glucosinolate biosynthesis in Arabidopsis.</title>
        <authorList>
            <person name="Kliebenstein D.J."/>
            <person name="Lambrix V.M."/>
            <person name="Reichelt M."/>
            <person name="Gershenzon J."/>
            <person name="Mitchell-Olds T."/>
        </authorList>
    </citation>
    <scope>NUCLEOTIDE SEQUENCE [MRNA]</scope>
    <scope>FUNCTION</scope>
    <source>
        <strain>cv. Landsberg erecta</strain>
    </source>
</reference>
<proteinExistence type="evidence at transcript level"/>
<keyword id="KW-0223">Dioxygenase</keyword>
<keyword id="KW-0408">Iron</keyword>
<keyword id="KW-0479">Metal-binding</keyword>
<keyword id="KW-0560">Oxidoreductase</keyword>